<dbReference type="EMBL" id="AY275836">
    <property type="protein sequence ID" value="AAP81748.1"/>
    <property type="molecule type" value="mRNA"/>
</dbReference>
<dbReference type="EMBL" id="AB109098">
    <property type="protein sequence ID" value="BAC98399.1"/>
    <property type="molecule type" value="mRNA"/>
</dbReference>
<dbReference type="EMBL" id="AB091054">
    <property type="protein sequence ID" value="BAC98397.1"/>
    <property type="molecule type" value="mRNA"/>
</dbReference>
<dbReference type="EMBL" id="AY232653">
    <property type="protein sequence ID" value="AAO74498.1"/>
    <property type="molecule type" value="mRNA"/>
</dbReference>
<dbReference type="EMBL" id="AY304581">
    <property type="protein sequence ID" value="AAQ97430.1"/>
    <property type="molecule type" value="mRNA"/>
</dbReference>
<dbReference type="EMBL" id="AY304582">
    <property type="protein sequence ID" value="AAQ97431.1"/>
    <property type="molecule type" value="mRNA"/>
</dbReference>
<dbReference type="EMBL" id="AY304583">
    <property type="protein sequence ID" value="AAQ97432.1"/>
    <property type="molecule type" value="mRNA"/>
</dbReference>
<dbReference type="EMBL" id="AY304584">
    <property type="protein sequence ID" value="AAQ97433.1"/>
    <property type="molecule type" value="mRNA"/>
</dbReference>
<dbReference type="EMBL" id="AB446491">
    <property type="protein sequence ID" value="BAG55268.1"/>
    <property type="molecule type" value="mRNA"/>
</dbReference>
<dbReference type="EMBL" id="AB097022">
    <property type="protein sequence ID" value="BAC77375.1"/>
    <property type="molecule type" value="mRNA"/>
</dbReference>
<dbReference type="EMBL" id="AC010226">
    <property type="status" value="NOT_ANNOTATED_CDS"/>
    <property type="molecule type" value="Genomic_DNA"/>
</dbReference>
<dbReference type="EMBL" id="CH471086">
    <property type="protein sequence ID" value="EAW48960.1"/>
    <property type="molecule type" value="Genomic_DNA"/>
</dbReference>
<dbReference type="EMBL" id="CH471086">
    <property type="protein sequence ID" value="EAW48961.1"/>
    <property type="molecule type" value="Genomic_DNA"/>
</dbReference>
<dbReference type="EMBL" id="BC109265">
    <property type="protein sequence ID" value="AAI09266.1"/>
    <property type="molecule type" value="mRNA"/>
</dbReference>
<dbReference type="EMBL" id="BC109266">
    <property type="protein sequence ID" value="AAI09267.1"/>
    <property type="molecule type" value="mRNA"/>
</dbReference>
<dbReference type="CCDS" id="CCDS4119.1">
    <molecule id="Q86XR7-1"/>
</dbReference>
<dbReference type="RefSeq" id="NP_001157940.1">
    <molecule id="Q86XR7-2"/>
    <property type="nucleotide sequence ID" value="NM_001164468.3"/>
</dbReference>
<dbReference type="RefSeq" id="NP_001157941.1">
    <property type="nucleotide sequence ID" value="NM_001164469.3"/>
</dbReference>
<dbReference type="RefSeq" id="NP_067681.1">
    <molecule id="Q86XR7-1"/>
    <property type="nucleotide sequence ID" value="NM_021649.7"/>
</dbReference>
<dbReference type="PDB" id="2M1W">
    <property type="method" value="NMR"/>
    <property type="chains" value="A=75-235"/>
</dbReference>
<dbReference type="PDB" id="9DKI">
    <property type="method" value="X-ray"/>
    <property type="resolution" value="3.00 A"/>
    <property type="chains" value="A=78-217"/>
</dbReference>
<dbReference type="PDB" id="9DLG">
    <property type="method" value="EM"/>
    <property type="resolution" value="5.60 A"/>
    <property type="chains" value="A/B/C/D/E=76-231"/>
</dbReference>
<dbReference type="PDBsum" id="2M1W"/>
<dbReference type="PDBsum" id="9DKI"/>
<dbReference type="PDBsum" id="9DLG"/>
<dbReference type="BMRB" id="Q86XR7"/>
<dbReference type="EMDB" id="EMD-46977"/>
<dbReference type="SMR" id="Q86XR7"/>
<dbReference type="BioGRID" id="131694">
    <property type="interactions" value="20"/>
</dbReference>
<dbReference type="BioGRID" id="970651">
    <property type="interactions" value="10"/>
</dbReference>
<dbReference type="ComplexPortal" id="CPX-10331">
    <property type="entry name" value="Triffosome complex"/>
</dbReference>
<dbReference type="CORUM" id="Q86XR7"/>
<dbReference type="DIP" id="DIP-33488N"/>
<dbReference type="ELM" id="Q86XR7"/>
<dbReference type="FunCoup" id="Q86XR7">
    <property type="interactions" value="353"/>
</dbReference>
<dbReference type="IntAct" id="Q86XR7">
    <property type="interactions" value="32"/>
</dbReference>
<dbReference type="MINT" id="Q86XR7"/>
<dbReference type="STRING" id="9606.ENSP00000415139"/>
<dbReference type="TCDB" id="8.A.43.2.1">
    <property type="family name" value="the neat-domain containing methaemoglobin heme sequestration (n-mhs) family"/>
</dbReference>
<dbReference type="GlyGen" id="Q86XR7">
    <property type="glycosylation" value="1 site, 1 O-linked glycan (1 site)"/>
</dbReference>
<dbReference type="iPTMnet" id="Q86XR7"/>
<dbReference type="PhosphoSitePlus" id="Q86XR7"/>
<dbReference type="SwissPalm" id="Q86XR7"/>
<dbReference type="BioMuta" id="TICAM2"/>
<dbReference type="DMDM" id="74727858"/>
<dbReference type="jPOST" id="Q86XR7"/>
<dbReference type="MassIVE" id="Q86XR7"/>
<dbReference type="PaxDb" id="9606-ENSP00000415139"/>
<dbReference type="PeptideAtlas" id="Q86XR7"/>
<dbReference type="ProteomicsDB" id="66519"/>
<dbReference type="ProteomicsDB" id="70323">
    <molecule id="Q86XR7-1"/>
</dbReference>
<dbReference type="Antibodypedia" id="34833">
    <property type="antibodies" value="347 antibodies from 35 providers"/>
</dbReference>
<dbReference type="DNASU" id="353376"/>
<dbReference type="Ensembl" id="ENST00000427199.3">
    <molecule id="Q86XR7-1"/>
    <property type="protein sequence ID" value="ENSP00000415139.3"/>
    <property type="gene ID" value="ENSG00000243414.6"/>
</dbReference>
<dbReference type="GeneID" id="100302736"/>
<dbReference type="GeneID" id="353376"/>
<dbReference type="KEGG" id="hsa:100302736"/>
<dbReference type="KEGG" id="hsa:353376"/>
<dbReference type="MANE-Select" id="ENST00000427199.3">
    <property type="protein sequence ID" value="ENSP00000415139.3"/>
    <property type="RefSeq nucleotide sequence ID" value="NM_021649.7"/>
    <property type="RefSeq protein sequence ID" value="NP_067681.1"/>
</dbReference>
<dbReference type="UCSC" id="uc003krc.4">
    <molecule id="Q86XR7-1"/>
    <property type="organism name" value="human"/>
</dbReference>
<dbReference type="AGR" id="HGNC:21354"/>
<dbReference type="AGR" id="HGNC:33945"/>
<dbReference type="CTD" id="100302736"/>
<dbReference type="CTD" id="353376"/>
<dbReference type="DisGeNET" id="100302736"/>
<dbReference type="DisGeNET" id="353376"/>
<dbReference type="GeneCards" id="TICAM2"/>
<dbReference type="HGNC" id="HGNC:21354">
    <property type="gene designation" value="TICAM2"/>
</dbReference>
<dbReference type="HPA" id="ENSG00000243414">
    <property type="expression patterns" value="Low tissue specificity"/>
</dbReference>
<dbReference type="MIM" id="608321">
    <property type="type" value="gene"/>
</dbReference>
<dbReference type="neXtProt" id="NX_Q86XR7"/>
<dbReference type="OpenTargets" id="ENSG00000243414"/>
<dbReference type="OpenTargets" id="ENSG00000251201"/>
<dbReference type="PharmGKB" id="PA134881157"/>
<dbReference type="PharmGKB" id="PA165660570"/>
<dbReference type="VEuPathDB" id="HostDB:ENSG00000243414"/>
<dbReference type="eggNOG" id="ENOG502S2I6">
    <property type="taxonomic scope" value="Eukaryota"/>
</dbReference>
<dbReference type="GeneTree" id="ENSGT00940000163706"/>
<dbReference type="HOGENOM" id="CLU_094608_0_0_1"/>
<dbReference type="InParanoid" id="Q86XR7"/>
<dbReference type="OMA" id="YCIKPGI"/>
<dbReference type="OrthoDB" id="62956at2759"/>
<dbReference type="PAN-GO" id="Q86XR7">
    <property type="GO annotations" value="7 GO annotations based on evolutionary models"/>
</dbReference>
<dbReference type="PhylomeDB" id="Q86XR7"/>
<dbReference type="TreeFam" id="TF313000"/>
<dbReference type="PathwayCommons" id="Q86XR7"/>
<dbReference type="Reactome" id="R-HSA-140534">
    <property type="pathway name" value="Caspase activation via Death Receptors in the presence of ligand"/>
</dbReference>
<dbReference type="Reactome" id="R-HSA-166016">
    <property type="pathway name" value="Toll Like Receptor 4 (TLR4) Cascade"/>
</dbReference>
<dbReference type="Reactome" id="R-HSA-166166">
    <property type="pathway name" value="MyD88-independent TLR4 cascade"/>
</dbReference>
<dbReference type="Reactome" id="R-HSA-2562578">
    <property type="pathway name" value="TRIF-mediated programmed cell death"/>
</dbReference>
<dbReference type="Reactome" id="R-HSA-6798695">
    <property type="pathway name" value="Neutrophil degranulation"/>
</dbReference>
<dbReference type="Reactome" id="R-HSA-936964">
    <property type="pathway name" value="Activation of IRF3, IRF7 mediated by TBK1, IKKEpsilon (IKBKE)"/>
</dbReference>
<dbReference type="Reactome" id="R-HSA-937041">
    <property type="pathway name" value="IKK complex recruitment mediated by RIP1"/>
</dbReference>
<dbReference type="Reactome" id="R-HSA-937072">
    <property type="pathway name" value="TRAF6-mediated induction of TAK1 complex within TLR4 complex"/>
</dbReference>
<dbReference type="Reactome" id="R-HSA-975163">
    <property type="pathway name" value="IRAK2 mediated activation of TAK1 complex upon TLR7/8 or 9 stimulation"/>
</dbReference>
<dbReference type="Reactome" id="R-HSA-9824878">
    <property type="pathway name" value="Regulation of TBK1, IKKEpsilon (IKBKE)-mediated activation of IRF3, IRF7"/>
</dbReference>
<dbReference type="SignaLink" id="Q86XR7"/>
<dbReference type="SIGNOR" id="Q86XR7"/>
<dbReference type="BioGRID-ORCS" id="100302736">
    <property type="hits" value="8 hits in 965 CRISPR screens"/>
</dbReference>
<dbReference type="BioGRID-ORCS" id="353376">
    <property type="hits" value="387 hits in 1060 CRISPR screens"/>
</dbReference>
<dbReference type="EvolutionaryTrace" id="Q86XR7"/>
<dbReference type="GeneWiki" id="TICAM2"/>
<dbReference type="Pharos" id="Q86XR7">
    <property type="development level" value="Tbio"/>
</dbReference>
<dbReference type="PRO" id="PR:Q86XR7"/>
<dbReference type="Proteomes" id="UP000005640">
    <property type="component" value="Chromosome 5"/>
</dbReference>
<dbReference type="RNAct" id="Q86XR7">
    <property type="molecule type" value="protein"/>
</dbReference>
<dbReference type="Bgee" id="ENSG00000243414">
    <property type="expression patterns" value="Expressed in monocyte and 94 other cell types or tissues"/>
</dbReference>
<dbReference type="GO" id="GO:0042995">
    <property type="term" value="C:cell projection"/>
    <property type="evidence" value="ECO:0007669"/>
    <property type="project" value="UniProtKB-KW"/>
</dbReference>
<dbReference type="GO" id="GO:0005769">
    <property type="term" value="C:early endosome"/>
    <property type="evidence" value="ECO:0000314"/>
    <property type="project" value="UniProtKB"/>
</dbReference>
<dbReference type="GO" id="GO:0031901">
    <property type="term" value="C:early endosome membrane"/>
    <property type="evidence" value="ECO:0007669"/>
    <property type="project" value="UniProtKB-SubCell"/>
</dbReference>
<dbReference type="GO" id="GO:0005783">
    <property type="term" value="C:endoplasmic reticulum"/>
    <property type="evidence" value="ECO:0000314"/>
    <property type="project" value="UniProtKB"/>
</dbReference>
<dbReference type="GO" id="GO:0005768">
    <property type="term" value="C:endosome"/>
    <property type="evidence" value="ECO:0000314"/>
    <property type="project" value="UniProt"/>
</dbReference>
<dbReference type="GO" id="GO:0010008">
    <property type="term" value="C:endosome membrane"/>
    <property type="evidence" value="ECO:0000314"/>
    <property type="project" value="UniProt"/>
</dbReference>
<dbReference type="GO" id="GO:0005794">
    <property type="term" value="C:Golgi apparatus"/>
    <property type="evidence" value="ECO:0007669"/>
    <property type="project" value="UniProtKB-SubCell"/>
</dbReference>
<dbReference type="GO" id="GO:0005770">
    <property type="term" value="C:late endosome"/>
    <property type="evidence" value="ECO:0000314"/>
    <property type="project" value="UniProtKB"/>
</dbReference>
<dbReference type="GO" id="GO:0031902">
    <property type="term" value="C:late endosome membrane"/>
    <property type="evidence" value="ECO:0007669"/>
    <property type="project" value="UniProtKB-SubCell"/>
</dbReference>
<dbReference type="GO" id="GO:0001891">
    <property type="term" value="C:phagocytic cup"/>
    <property type="evidence" value="ECO:0000314"/>
    <property type="project" value="UniProtKB"/>
</dbReference>
<dbReference type="GO" id="GO:0005886">
    <property type="term" value="C:plasma membrane"/>
    <property type="evidence" value="ECO:0000314"/>
    <property type="project" value="UniProtKB"/>
</dbReference>
<dbReference type="GO" id="GO:0030667">
    <property type="term" value="C:secretory granule membrane"/>
    <property type="evidence" value="ECO:0000304"/>
    <property type="project" value="Reactome"/>
</dbReference>
<dbReference type="GO" id="GO:0060090">
    <property type="term" value="F:molecular adaptor activity"/>
    <property type="evidence" value="ECO:0000314"/>
    <property type="project" value="UniProt"/>
</dbReference>
<dbReference type="GO" id="GO:0035591">
    <property type="term" value="F:signaling adaptor activity"/>
    <property type="evidence" value="ECO:0000318"/>
    <property type="project" value="GO_Central"/>
</dbReference>
<dbReference type="GO" id="GO:0071222">
    <property type="term" value="P:cellular response to lipopolysaccharide"/>
    <property type="evidence" value="ECO:0000314"/>
    <property type="project" value="UniProtKB"/>
</dbReference>
<dbReference type="GO" id="GO:0006954">
    <property type="term" value="P:inflammatory response"/>
    <property type="evidence" value="ECO:0007669"/>
    <property type="project" value="UniProtKB-KW"/>
</dbReference>
<dbReference type="GO" id="GO:0045087">
    <property type="term" value="P:innate immune response"/>
    <property type="evidence" value="ECO:0007669"/>
    <property type="project" value="UniProtKB-KW"/>
</dbReference>
<dbReference type="GO" id="GO:0071650">
    <property type="term" value="P:negative regulation of chemokine (C-C motif) ligand 5 production"/>
    <property type="evidence" value="ECO:0000315"/>
    <property type="project" value="UniProtKB"/>
</dbReference>
<dbReference type="GO" id="GO:0034144">
    <property type="term" value="P:negative regulation of toll-like receptor 4 signaling pathway"/>
    <property type="evidence" value="ECO:0000314"/>
    <property type="project" value="UniProtKB"/>
</dbReference>
<dbReference type="GO" id="GO:0006909">
    <property type="term" value="P:phagocytosis"/>
    <property type="evidence" value="ECO:0000315"/>
    <property type="project" value="UniProtKB"/>
</dbReference>
<dbReference type="GO" id="GO:0043123">
    <property type="term" value="P:positive regulation of canonical NF-kappaB signal transduction"/>
    <property type="evidence" value="ECO:0007001"/>
    <property type="project" value="UniProtKB"/>
</dbReference>
<dbReference type="GO" id="GO:0071651">
    <property type="term" value="P:positive regulation of chemokine (C-C motif) ligand 5 production"/>
    <property type="evidence" value="ECO:0000315"/>
    <property type="project" value="UniProtKB"/>
</dbReference>
<dbReference type="GO" id="GO:2000494">
    <property type="term" value="P:positive regulation of interleukin-18-mediated signaling pathway"/>
    <property type="evidence" value="ECO:0000315"/>
    <property type="project" value="UniProtKB"/>
</dbReference>
<dbReference type="GO" id="GO:0034145">
    <property type="term" value="P:positive regulation of toll-like receptor 4 signaling pathway"/>
    <property type="evidence" value="ECO:0000314"/>
    <property type="project" value="UniProtKB"/>
</dbReference>
<dbReference type="GO" id="GO:0032481">
    <property type="term" value="P:positive regulation of type I interferon production"/>
    <property type="evidence" value="ECO:0000314"/>
    <property type="project" value="UniProt"/>
</dbReference>
<dbReference type="GO" id="GO:0034142">
    <property type="term" value="P:toll-like receptor 4 signaling pathway"/>
    <property type="evidence" value="ECO:0000314"/>
    <property type="project" value="UniProt"/>
</dbReference>
<dbReference type="GO" id="GO:0035669">
    <property type="term" value="P:TRAM-dependent toll-like receptor 4 signaling pathway"/>
    <property type="evidence" value="ECO:0000314"/>
    <property type="project" value="UniProtKB"/>
</dbReference>
<dbReference type="GO" id="GO:0035666">
    <property type="term" value="P:TRIF-dependent toll-like receptor signaling pathway"/>
    <property type="evidence" value="ECO:0000318"/>
    <property type="project" value="GO_Central"/>
</dbReference>
<dbReference type="FunFam" id="3.40.50.10140:FF:000014">
    <property type="entry name" value="TIR domain-containing adapter molecule 2"/>
    <property type="match status" value="1"/>
</dbReference>
<dbReference type="Gene3D" id="3.40.50.10140">
    <property type="entry name" value="Toll/interleukin-1 receptor homology (TIR) domain"/>
    <property type="match status" value="1"/>
</dbReference>
<dbReference type="InterPro" id="IPR046946">
    <property type="entry name" value="TCAM1/2"/>
</dbReference>
<dbReference type="InterPro" id="IPR000157">
    <property type="entry name" value="TIR_dom"/>
</dbReference>
<dbReference type="InterPro" id="IPR035897">
    <property type="entry name" value="Toll_tir_struct_dom_sf"/>
</dbReference>
<dbReference type="PANTHER" id="PTHR47230">
    <property type="entry name" value="TIR DOMAIN-CONTAINING ADAPTER MOLECULE 1"/>
    <property type="match status" value="1"/>
</dbReference>
<dbReference type="PANTHER" id="PTHR47230:SF2">
    <property type="entry name" value="TIR DOMAIN-CONTAINING ADAPTER MOLECULE 2"/>
    <property type="match status" value="1"/>
</dbReference>
<dbReference type="Pfam" id="PF13676">
    <property type="entry name" value="TIR_2"/>
    <property type="match status" value="1"/>
</dbReference>
<dbReference type="SUPFAM" id="SSF52200">
    <property type="entry name" value="Toll/Interleukin receptor TIR domain"/>
    <property type="match status" value="1"/>
</dbReference>
<dbReference type="PROSITE" id="PS50104">
    <property type="entry name" value="TIR"/>
    <property type="match status" value="1"/>
</dbReference>
<reference key="1">
    <citation type="journal article" date="2003" name="J. Biol. Chem.">
        <title>TIRP, a novel Toll/interleukin-1 receptor (TIR) domain-containing adapter protein involved in TIR signaling.</title>
        <authorList>
            <person name="Bin L.-H."/>
            <person name="Xu L.-G."/>
            <person name="Shu H.-B."/>
        </authorList>
    </citation>
    <scope>NUCLEOTIDE SEQUENCE [MRNA] (ISOFORM 1)</scope>
    <scope>FUNCTION</scope>
    <scope>DOMAIN</scope>
    <scope>INTERACTION WITH TRAF6; IL1R1; IL1RAP; IRAK1; IRAK2; IRAK3; IRAK4; TIRAP AND TICAM1</scope>
    <scope>TISSUE SPECIFICITY</scope>
</reference>
<reference key="2">
    <citation type="journal article" date="2003" name="J. Biol. Chem.">
        <title>TIR-containing adapter molecule (TICAM)-2, a bridging adapter recruiting to toll-like receptor 4 TICAM-1 that induces interferon-beta.</title>
        <authorList>
            <person name="Oshiumi H."/>
            <person name="Sasai M."/>
            <person name="Shida K."/>
            <person name="Fujita T."/>
            <person name="Matsumoto M."/>
            <person name="Seya T."/>
        </authorList>
    </citation>
    <scope>NUCLEOTIDE SEQUENCE [MRNA] (ISOFORM 1)</scope>
    <scope>FUNCTION</scope>
    <scope>SUBUNIT</scope>
    <scope>INTERACTION WITH TICAM1 AND TLR4</scope>
    <scope>TISSUE SPECIFICITY</scope>
    <scope>MUTAGENESIS OF PRO-116 AND CYS-117</scope>
</reference>
<reference key="3">
    <citation type="journal article" date="2003" name="J. Exp. Med.">
        <title>LPS-TLR4 signaling to IRF-3/7 and NF-kappaB involves the toll adapters TRAM and TRIF.</title>
        <authorList>
            <person name="Fitzgerald K.A."/>
            <person name="Rowe D.C."/>
            <person name="Barnes B.J."/>
            <person name="Caffrey D.R."/>
            <person name="Visintin A."/>
            <person name="Latz E."/>
            <person name="Monks B."/>
            <person name="Pitha P.M."/>
            <person name="Golenbock D.T."/>
        </authorList>
    </citation>
    <scope>NUCLEOTIDE SEQUENCE [MRNA] (ISOFORM 1)</scope>
    <scope>FUNCTION</scope>
    <scope>INTERACTION WITH TICAM1; TIRAP; TLR4; IRF3 AND IRF7</scope>
    <scope>MUTAGENESIS OF PRO-116 AND CYS-117</scope>
</reference>
<reference key="4">
    <citation type="journal article" date="2003" name="J. Exp. Med.">
        <authorList>
            <person name="Fitzgerald K.A."/>
            <person name="Rowe D.C."/>
            <person name="Barnes B.J."/>
            <person name="Caffrey D.R."/>
            <person name="Visintin A."/>
            <person name="Latz E."/>
            <person name="Monks B."/>
            <person name="Pitha P.M."/>
            <person name="Golenbock D.T."/>
        </authorList>
    </citation>
    <scope>ERRATUM OF PUBMED:14517278</scope>
</reference>
<reference key="5">
    <citation type="journal article" date="2008" name="Immunogenetics">
        <title>Natural selection in the TLR-related genes in the course of primate evolution.</title>
        <authorList>
            <person name="Nakajima T."/>
            <person name="Ohtani H."/>
            <person name="Satta Y."/>
            <person name="Uno Y."/>
            <person name="Akari H."/>
            <person name="Ishida T."/>
            <person name="Kimura A."/>
        </authorList>
    </citation>
    <scope>NUCLEOTIDE SEQUENCE [MRNA] (ISOFORM 1)</scope>
</reference>
<reference key="6">
    <citation type="journal article" date="2009" name="Nat. Immunol.">
        <title>TAG, a splice variant of the adaptor TRAM, negatively regulates the adaptor MyD88-independent TLR4 pathway.</title>
        <authorList>
            <person name="Palsson-McDermott E.M."/>
            <person name="Doyle S.L."/>
            <person name="McGettrick A.F."/>
            <person name="Hardy M."/>
            <person name="Husebye H."/>
            <person name="Banahan K."/>
            <person name="Gong M."/>
            <person name="Golenbock D."/>
            <person name="Espevik T."/>
            <person name="O'Neill L.A."/>
        </authorList>
    </citation>
    <scope>NUCLEOTIDE SEQUENCE [MRNA] (ISOFORMS 1 AND 2)</scope>
    <scope>FUNCTION (ISOFORM 2)</scope>
    <scope>SUBCELLULAR LOCATION</scope>
    <scope>TISSUE SPECIFICITY</scope>
</reference>
<reference key="7">
    <citation type="journal article" date="2003" name="Oncogene">
        <title>Large-scale identification and characterization of human genes that activate NF-kappaB and MAPK signaling pathways.</title>
        <authorList>
            <person name="Matsuda A."/>
            <person name="Suzuki Y."/>
            <person name="Honda G."/>
            <person name="Muramatsu S."/>
            <person name="Matsuzaki O."/>
            <person name="Nagano Y."/>
            <person name="Doi T."/>
            <person name="Shimotohno K."/>
            <person name="Harada T."/>
            <person name="Nishida E."/>
            <person name="Hayashi H."/>
            <person name="Sugano S."/>
        </authorList>
    </citation>
    <scope>NUCLEOTIDE SEQUENCE [LARGE SCALE MRNA]</scope>
    <source>
        <tissue>Lung</tissue>
    </source>
</reference>
<reference key="8">
    <citation type="journal article" date="2004" name="Nature">
        <title>The DNA sequence and comparative analysis of human chromosome 5.</title>
        <authorList>
            <person name="Schmutz J."/>
            <person name="Martin J."/>
            <person name="Terry A."/>
            <person name="Couronne O."/>
            <person name="Grimwood J."/>
            <person name="Lowry S."/>
            <person name="Gordon L.A."/>
            <person name="Scott D."/>
            <person name="Xie G."/>
            <person name="Huang W."/>
            <person name="Hellsten U."/>
            <person name="Tran-Gyamfi M."/>
            <person name="She X."/>
            <person name="Prabhakar S."/>
            <person name="Aerts A."/>
            <person name="Altherr M."/>
            <person name="Bajorek E."/>
            <person name="Black S."/>
            <person name="Branscomb E."/>
            <person name="Caoile C."/>
            <person name="Challacombe J.F."/>
            <person name="Chan Y.M."/>
            <person name="Denys M."/>
            <person name="Detter J.C."/>
            <person name="Escobar J."/>
            <person name="Flowers D."/>
            <person name="Fotopulos D."/>
            <person name="Glavina T."/>
            <person name="Gomez M."/>
            <person name="Gonzales E."/>
            <person name="Goodstein D."/>
            <person name="Grigoriev I."/>
            <person name="Groza M."/>
            <person name="Hammon N."/>
            <person name="Hawkins T."/>
            <person name="Haydu L."/>
            <person name="Israni S."/>
            <person name="Jett J."/>
            <person name="Kadner K."/>
            <person name="Kimball H."/>
            <person name="Kobayashi A."/>
            <person name="Lopez F."/>
            <person name="Lou Y."/>
            <person name="Martinez D."/>
            <person name="Medina C."/>
            <person name="Morgan J."/>
            <person name="Nandkeshwar R."/>
            <person name="Noonan J.P."/>
            <person name="Pitluck S."/>
            <person name="Pollard M."/>
            <person name="Predki P."/>
            <person name="Priest J."/>
            <person name="Ramirez L."/>
            <person name="Retterer J."/>
            <person name="Rodriguez A."/>
            <person name="Rogers S."/>
            <person name="Salamov A."/>
            <person name="Salazar A."/>
            <person name="Thayer N."/>
            <person name="Tice H."/>
            <person name="Tsai M."/>
            <person name="Ustaszewska A."/>
            <person name="Vo N."/>
            <person name="Wheeler J."/>
            <person name="Wu K."/>
            <person name="Yang J."/>
            <person name="Dickson M."/>
            <person name="Cheng J.-F."/>
            <person name="Eichler E.E."/>
            <person name="Olsen A."/>
            <person name="Pennacchio L.A."/>
            <person name="Rokhsar D.S."/>
            <person name="Richardson P."/>
            <person name="Lucas S.M."/>
            <person name="Myers R.M."/>
            <person name="Rubin E.M."/>
        </authorList>
    </citation>
    <scope>NUCLEOTIDE SEQUENCE [LARGE SCALE GENOMIC DNA]</scope>
</reference>
<reference key="9">
    <citation type="submission" date="2005-09" db="EMBL/GenBank/DDBJ databases">
        <authorList>
            <person name="Mural R.J."/>
            <person name="Istrail S."/>
            <person name="Sutton G.G."/>
            <person name="Florea L."/>
            <person name="Halpern A.L."/>
            <person name="Mobarry C.M."/>
            <person name="Lippert R."/>
            <person name="Walenz B."/>
            <person name="Shatkay H."/>
            <person name="Dew I."/>
            <person name="Miller J.R."/>
            <person name="Flanigan M.J."/>
            <person name="Edwards N.J."/>
            <person name="Bolanos R."/>
            <person name="Fasulo D."/>
            <person name="Halldorsson B.V."/>
            <person name="Hannenhalli S."/>
            <person name="Turner R."/>
            <person name="Yooseph S."/>
            <person name="Lu F."/>
            <person name="Nusskern D.R."/>
            <person name="Shue B.C."/>
            <person name="Zheng X.H."/>
            <person name="Zhong F."/>
            <person name="Delcher A.L."/>
            <person name="Huson D.H."/>
            <person name="Kravitz S.A."/>
            <person name="Mouchard L."/>
            <person name="Reinert K."/>
            <person name="Remington K.A."/>
            <person name="Clark A.G."/>
            <person name="Waterman M.S."/>
            <person name="Eichler E.E."/>
            <person name="Adams M.D."/>
            <person name="Hunkapiller M.W."/>
            <person name="Myers E.W."/>
            <person name="Venter J.C."/>
        </authorList>
    </citation>
    <scope>NUCLEOTIDE SEQUENCE [LARGE SCALE GENOMIC DNA]</scope>
</reference>
<reference key="10">
    <citation type="journal article" date="2004" name="Genome Res.">
        <title>The status, quality, and expansion of the NIH full-length cDNA project: the Mammalian Gene Collection (MGC).</title>
        <authorList>
            <consortium name="The MGC Project Team"/>
        </authorList>
    </citation>
    <scope>NUCLEOTIDE SEQUENCE [LARGE SCALE MRNA] (ISOFORM 1)</scope>
</reference>
<reference key="11">
    <citation type="journal article" date="2006" name="Proc. Natl. Acad. Sci. U.S.A.">
        <title>The myristoylation of TRIF-related adaptor molecule is essential for Toll-like receptor 4 signal transduction.</title>
        <authorList>
            <person name="Rowe D.C."/>
            <person name="McGettrick A.F."/>
            <person name="Latz E."/>
            <person name="Monks B.G."/>
            <person name="Gay N.J."/>
            <person name="Yamamoto M."/>
            <person name="Akira S."/>
            <person name="O'Neill L.A."/>
            <person name="Fitzgerald K.A."/>
            <person name="Golenbock D.T."/>
        </authorList>
    </citation>
    <scope>FUNCTION</scope>
    <scope>SUBCELLULAR LOCATION</scope>
    <scope>MYRISTOYLATION AT GLY-2</scope>
    <scope>MUTAGENESIS OF GLY-2</scope>
</reference>
<reference key="12">
    <citation type="journal article" date="2006" name="Proc. Natl. Acad. Sci. U.S.A.">
        <title>Trif-related adapter molecule is phosphorylated by PKCepsilon during Toll-like receptor 4 signaling.</title>
        <authorList>
            <person name="McGettrick A.F."/>
            <person name="Brint E.K."/>
            <person name="Palsson-McDermott E.M."/>
            <person name="Rowe D.C."/>
            <person name="Golenbock D.T."/>
            <person name="Gay N.J."/>
            <person name="Fitzgerald K.A."/>
            <person name="O'Neill L.A.J."/>
        </authorList>
    </citation>
    <scope>FUNCTION</scope>
    <scope>SUBCELLULAR LOCATION</scope>
    <scope>PHOSPHORYLATION AT SER-16</scope>
    <scope>MUTAGENESIS OF SER-6; SER-10; SER-14 AND SER-16</scope>
</reference>
<reference key="13">
    <citation type="journal article" date="2012" name="PLoS ONE">
        <title>TRAM is involved in IL-18 signaling and functions as a sorting adaptor for MyD88.</title>
        <authorList>
            <person name="Ohnishi H."/>
            <person name="Tochio H."/>
            <person name="Kato Z."/>
            <person name="Kawamoto N."/>
            <person name="Kimura T."/>
            <person name="Kubota K."/>
            <person name="Yamamoto T."/>
            <person name="Funasaka T."/>
            <person name="Nakano H."/>
            <person name="Wong R.W."/>
            <person name="Shirakawa M."/>
            <person name="Kondo N."/>
        </authorList>
    </citation>
    <scope>FUNCTION</scope>
    <scope>INTERACTION WITH MYD88; IL18R1 AND IL18RAP</scope>
</reference>
<reference key="14">
    <citation type="journal article" date="2014" name="J. Immunol.">
        <title>TRAM is required for TLR2 endosomal signaling to type I IFN induction.</title>
        <authorList>
            <person name="Stack J."/>
            <person name="Doyle S.L."/>
            <person name="Connolly D.J."/>
            <person name="Reinert L.S."/>
            <person name="O'Keeffe K.M."/>
            <person name="McLoughlin R.M."/>
            <person name="Paludan S.R."/>
            <person name="Bowie A.G."/>
        </authorList>
    </citation>
    <scope>FUNCTION</scope>
    <scope>INTERACTION WITH TLR2 AND MYD88</scope>
    <scope>MUTAGENESIS OF GLY-2</scope>
</reference>
<reference key="15">
    <citation type="journal article" date="2015" name="J. Immunol.">
        <title>Phosphatase PTPN4 preferentially inhibits TRIF-dependent TLR4 pathway by dephosphorylating TRAM.</title>
        <authorList>
            <person name="Huai W."/>
            <person name="Song H."/>
            <person name="Wang L."/>
            <person name="Li B."/>
            <person name="Zhao J."/>
            <person name="Han L."/>
            <person name="Gao C."/>
            <person name="Jiang G."/>
            <person name="Zhang L."/>
            <person name="Zhao W."/>
        </authorList>
    </citation>
    <scope>PHOSPHORYLATION AT TYR-167</scope>
    <scope>SUBCELLULAR LOCATION</scope>
    <scope>MUTAGENESIS OF TYR-154 AND TYR-167</scope>
    <scope>FUNCTION</scope>
</reference>
<reference key="16">
    <citation type="journal article" date="2019" name="PLoS Pathog.">
        <title>The TLR4 adaptor TRAM controls the phagocytosis of Gram-negative bacteria by interacting with the Rab11-family interacting protein 2.</title>
        <authorList>
            <person name="Skjesol A."/>
            <person name="Yurchenko M."/>
            <person name="Boesl K."/>
            <person name="Gravastrand C."/>
            <person name="Nilsen K.E."/>
            <person name="Groevdal L.M."/>
            <person name="Agliano F."/>
            <person name="Patane F."/>
            <person name="Lentini G."/>
            <person name="Kim H."/>
            <person name="Teti G."/>
            <person name="Kumar Sharma A."/>
            <person name="Kandasamy R.K."/>
            <person name="Sporsheim B."/>
            <person name="Starheim K.K."/>
            <person name="Golenbock D.T."/>
            <person name="Stenmark H."/>
            <person name="McCaffrey M."/>
            <person name="Espevik T."/>
            <person name="Husebye H."/>
        </authorList>
    </citation>
    <scope>FUNCTION</scope>
    <scope>INTERACTION WITH RAB11FIP2</scope>
    <scope>SUBCELLULAR LOCATION</scope>
</reference>
<protein>
    <recommendedName>
        <fullName>TIR domain-containing adapter molecule 2</fullName>
        <shortName>TICAM-2</shortName>
    </recommendedName>
    <alternativeName>
        <fullName>Putative NF-kappa-B-activating protein 502</fullName>
    </alternativeName>
    <alternativeName>
        <fullName>TRIF-related adapter molecule</fullName>
    </alternativeName>
    <alternativeName>
        <fullName>Toll-like receptor adaptor protein 3</fullName>
    </alternativeName>
    <alternativeName>
        <fullName>Toll/interleukin-1 receptor domain-containing protein</fullName>
        <shortName>MyD88-4</shortName>
    </alternativeName>
</protein>
<name>TCAM2_HUMAN</name>
<evidence type="ECO:0000255" key="1">
    <source>
        <dbReference type="PROSITE-ProRule" id="PRU00204"/>
    </source>
</evidence>
<evidence type="ECO:0000256" key="2">
    <source>
        <dbReference type="SAM" id="MobiDB-lite"/>
    </source>
</evidence>
<evidence type="ECO:0000269" key="3">
    <source>
    </source>
</evidence>
<evidence type="ECO:0000269" key="4">
    <source>
    </source>
</evidence>
<evidence type="ECO:0000269" key="5">
    <source>
    </source>
</evidence>
<evidence type="ECO:0000269" key="6">
    <source>
    </source>
</evidence>
<evidence type="ECO:0000269" key="7">
    <source>
    </source>
</evidence>
<evidence type="ECO:0000269" key="8">
    <source>
    </source>
</evidence>
<evidence type="ECO:0000269" key="9">
    <source>
    </source>
</evidence>
<evidence type="ECO:0000269" key="10">
    <source>
    </source>
</evidence>
<evidence type="ECO:0000269" key="11">
    <source>
    </source>
</evidence>
<evidence type="ECO:0000269" key="12">
    <source>
    </source>
</evidence>
<evidence type="ECO:0000303" key="13">
    <source>
    </source>
</evidence>
<evidence type="ECO:0007829" key="14">
    <source>
        <dbReference type="PDB" id="2M1W"/>
    </source>
</evidence>
<sequence>MGIGKSKINSCPLSLSWGKRHSVDTSPGYHESDSKKSEDLSLCNVAEHSNTTEGPTGKQEGAQSVEEMFEEEAEEEVFLKFVILHAEDDTDEALRVQNLLQDDFGIKPGIIFAEMPCGRQHLQNLDDAVNGSAWTILLLTENFLRDTWCNFQFYTSLMNSVNRQHKYNSVIPMRPLNNPLPRERTPFALQTINALEEESRGFPTQVERIFQESVYKTQQTIWKETRNMVQRQFIA</sequence>
<feature type="initiator methionine" description="Removed">
    <location>
        <position position="1"/>
    </location>
</feature>
<feature type="chain" id="PRO_0000317689" description="TIR domain-containing adapter molecule 2">
    <location>
        <begin position="2"/>
        <end position="235"/>
    </location>
</feature>
<feature type="domain" description="TIR" evidence="1">
    <location>
        <begin position="73"/>
        <end position="229"/>
    </location>
</feature>
<feature type="region of interest" description="Disordered" evidence="2">
    <location>
        <begin position="1"/>
        <end position="39"/>
    </location>
</feature>
<feature type="compositionally biased region" description="Basic and acidic residues" evidence="2">
    <location>
        <begin position="30"/>
        <end position="39"/>
    </location>
</feature>
<feature type="modified residue" description="Phosphoserine; by PKC/PRKCE" evidence="7">
    <location>
        <position position="16"/>
    </location>
</feature>
<feature type="modified residue" description="Phosphotyrosine" evidence="11">
    <location>
        <position position="167"/>
    </location>
</feature>
<feature type="lipid moiety-binding region" description="N-myristoyl glycine" evidence="6">
    <location>
        <position position="2"/>
    </location>
</feature>
<feature type="splice variant" id="VSP_047437" description="In isoform 2." evidence="13">
    <original>MGIGKSKINSCPLSLSWGKR</original>
    <variation>MPRPGSAQRWAAVAGRWGCRLLALLLLVPGPGGASEITFELPDNAKQCFYEDIAQGTKCTLEFQVITGGHYDVDCRLEDPDGKVLYKEMKKQYDSFTFTASKNGTYKFCFSNEFSTFTHKTVYFDFQVGEDPPLFPSENRVSALTQMESACVSIHEALKSVIDYQTHFRLREAQGRSRAEDLNTRVAYW</variation>
    <location>
        <begin position="1"/>
        <end position="20"/>
    </location>
</feature>
<feature type="mutagenesis site" description="Results in relocalization from membrane to cytosol; Loss of ability to transduce TLR4-signal. Loss of TLR2-mediated activation of IRF7." evidence="6 10">
    <original>G</original>
    <variation>A</variation>
    <location>
        <position position="2"/>
    </location>
</feature>
<feature type="mutagenesis site" description="Loss of phosphorylation. Significant reduction in the ability to activate IRF3 or NF-kappa-B." evidence="7">
    <original>S</original>
    <variation>A</variation>
    <location>
        <position position="6"/>
    </location>
</feature>
<feature type="mutagenesis site" description="No effect on phosphorylation and on the ability to activate IRF3 or NF-kappa-B." evidence="7">
    <original>S</original>
    <variation>A</variation>
    <location>
        <position position="10"/>
    </location>
</feature>
<feature type="mutagenesis site" description="No effect on phosphorylation and on the ability to activate IRF3 or NF-kappa-B." evidence="7">
    <original>S</original>
    <variation>A</variation>
    <location>
        <position position="14"/>
    </location>
</feature>
<feature type="mutagenesis site" description="Loss of phosphorylation. Abolishes ability to activate IRF3 or NF-kappa-B and to transduce TLR4 signal." evidence="7">
    <original>S</original>
    <variation>A</variation>
    <location>
        <position position="16"/>
    </location>
</feature>
<feature type="mutagenesis site" description="Significant decrease of localization in the membrane." evidence="7">
    <original>S</original>
    <variation>E</variation>
    <location>
        <position position="16"/>
    </location>
</feature>
<feature type="mutagenesis site" description="Loss of ability to dimerize. Significant loss of RANTES-inducing activity. Loss of ability to induce NF-kappa-B activation." evidence="4 5">
    <original>P</original>
    <variation>H</variation>
    <location>
        <position position="116"/>
    </location>
</feature>
<feature type="mutagenesis site" description="Loss of ability to dimerize. Loss of RANTES-inducing activity and ability to induce NF-kappa-B activation. Inhibition of TLR4-dependent activation of IRF3 and IRF7. Loss of interaction with TLR4." evidence="4 5">
    <original>C</original>
    <variation>H</variation>
    <location>
        <position position="117"/>
    </location>
</feature>
<feature type="mutagenesis site" description="No effect on phosphorylation." evidence="11">
    <original>Y</original>
    <variation>F</variation>
    <location>
        <position position="154"/>
    </location>
</feature>
<feature type="mutagenesis site" description="Complete loss of phosphorylation in response to LPS." evidence="11">
    <original>Y</original>
    <variation>F</variation>
    <location>
        <position position="167"/>
    </location>
</feature>
<feature type="strand" evidence="14">
    <location>
        <begin position="80"/>
        <end position="84"/>
    </location>
</feature>
<feature type="strand" evidence="14">
    <location>
        <begin position="87"/>
        <end position="89"/>
    </location>
</feature>
<feature type="helix" evidence="14">
    <location>
        <begin position="90"/>
        <end position="100"/>
    </location>
</feature>
<feature type="turn" evidence="14">
    <location>
        <begin position="101"/>
        <end position="104"/>
    </location>
</feature>
<feature type="strand" evidence="14">
    <location>
        <begin position="108"/>
        <end position="111"/>
    </location>
</feature>
<feature type="turn" evidence="14">
    <location>
        <begin position="112"/>
        <end position="114"/>
    </location>
</feature>
<feature type="strand" evidence="14">
    <location>
        <begin position="118"/>
        <end position="120"/>
    </location>
</feature>
<feature type="helix" evidence="14">
    <location>
        <begin position="125"/>
        <end position="128"/>
    </location>
</feature>
<feature type="strand" evidence="14">
    <location>
        <begin position="130"/>
        <end position="133"/>
    </location>
</feature>
<feature type="strand" evidence="14">
    <location>
        <begin position="135"/>
        <end position="137"/>
    </location>
</feature>
<feature type="helix" evidence="14">
    <location>
        <begin position="141"/>
        <end position="153"/>
    </location>
</feature>
<feature type="helix" evidence="14">
    <location>
        <begin position="155"/>
        <end position="160"/>
    </location>
</feature>
<feature type="strand" evidence="14">
    <location>
        <begin position="166"/>
        <end position="168"/>
    </location>
</feature>
<feature type="strand" evidence="14">
    <location>
        <begin position="176"/>
        <end position="178"/>
    </location>
</feature>
<feature type="helix" evidence="14">
    <location>
        <begin position="182"/>
        <end position="184"/>
    </location>
</feature>
<feature type="turn" evidence="14">
    <location>
        <begin position="187"/>
        <end position="191"/>
    </location>
</feature>
<feature type="strand" evidence="14">
    <location>
        <begin position="196"/>
        <end position="199"/>
    </location>
</feature>
<feature type="helix" evidence="14">
    <location>
        <begin position="202"/>
        <end position="209"/>
    </location>
</feature>
<feature type="helix" evidence="14">
    <location>
        <begin position="212"/>
        <end position="232"/>
    </location>
</feature>
<organism>
    <name type="scientific">Homo sapiens</name>
    <name type="common">Human</name>
    <dbReference type="NCBI Taxonomy" id="9606"/>
    <lineage>
        <taxon>Eukaryota</taxon>
        <taxon>Metazoa</taxon>
        <taxon>Chordata</taxon>
        <taxon>Craniata</taxon>
        <taxon>Vertebrata</taxon>
        <taxon>Euteleostomi</taxon>
        <taxon>Mammalia</taxon>
        <taxon>Eutheria</taxon>
        <taxon>Euarchontoglires</taxon>
        <taxon>Primates</taxon>
        <taxon>Haplorrhini</taxon>
        <taxon>Catarrhini</taxon>
        <taxon>Hominidae</taxon>
        <taxon>Homo</taxon>
    </lineage>
</organism>
<keyword id="KW-0002">3D-structure</keyword>
<keyword id="KW-0025">Alternative splicing</keyword>
<keyword id="KW-1003">Cell membrane</keyword>
<keyword id="KW-0966">Cell projection</keyword>
<keyword id="KW-0963">Cytoplasm</keyword>
<keyword id="KW-0256">Endoplasmic reticulum</keyword>
<keyword id="KW-0967">Endosome</keyword>
<keyword id="KW-0333">Golgi apparatus</keyword>
<keyword id="KW-0391">Immunity</keyword>
<keyword id="KW-0395">Inflammatory response</keyword>
<keyword id="KW-0399">Innate immunity</keyword>
<keyword id="KW-0449">Lipoprotein</keyword>
<keyword id="KW-0472">Membrane</keyword>
<keyword id="KW-0519">Myristate</keyword>
<keyword id="KW-0597">Phosphoprotein</keyword>
<keyword id="KW-1267">Proteomics identification</keyword>
<keyword id="KW-1185">Reference proteome</keyword>
<proteinExistence type="evidence at protein level"/>
<gene>
    <name type="primary">TICAM2</name>
    <name type="synonym">TIRAP3</name>
    <name type="synonym">TIRP</name>
    <name type="synonym">TRAM</name>
</gene>
<comment type="function">
    <text evidence="6 7 9 10 11 12">Functions as a sorting adapter in different signaling pathways to facilitate downstream signaling leading to type I interferon induction (PubMed:16603631, PubMed:16757566, PubMed:25385819, PubMed:25825441). In TLR4 signaling, physically bridges TLR4 and TICAM1 and functionally transmits signal to TICAM1 in early endosomes after endocytosis of TLR4. In TLR2 signaling, physically bridges TLR2 and MYD88 and is required for the TLR2-dependent movement of MYD88 to endosomes following ligand engagement (PubMed:25385819). Involved in IL-18 signaling and is proposed to function as a sorting adapter for MYD88 in IL-18 signaling during adaptive immune response (PubMed:22685567). Forms a complex with RAB11FIP2 that is recruited to the phagosomes to promote the activation of the actin-regulatory GTPases RAC1 and CDC42 and subsequent phagocytosis of Gram-negative bacteria (PubMed:30883606).</text>
</comment>
<comment type="function">
    <molecule>Isoform 2</molecule>
    <text>Proposed to inhibit LPS-TLR4 signaling at the late endosome by interaction with isoform 1 thereby disrupting the association of isoform 1 with TICAM1. May be involved in TLR4 degradation in late endosomes.</text>
</comment>
<comment type="subunit">
    <text evidence="3 4 5 9 10 12">Homodimer. Interacts with TLR4, TICAM1, IRF3 and IRF7 in response to LPS. Interacts with IL1R1, IL1RAP, IRAK2, IRAK3 and TRAF6. Interacts with protein kinase-inactive mutants of IRAK1 and IRAK4. Isoform 1 interacts with isoform 2; the interaction occurs in late endosomes and disrupts the interaction between isoform 1 and TICAM1. Interacts with MYD88; the interaction decreases after IL-18 stimulation in a time-dependent manner. Interacts with IL18R1 and IL18RAP. Interacts with TLR2 (PubMed:25385819). Interacts with RAB11FIP2 (PubMed:30883606).</text>
</comment>
<comment type="interaction">
    <interactant intactId="EBI-525927">
        <id>Q86XR7</id>
    </interactant>
    <interactant intactId="EBI-748397">
        <id>P50222</id>
        <label>MEOX2</label>
    </interactant>
    <organismsDiffer>false</organismsDiffer>
    <experiments>3</experiments>
</comment>
<comment type="interaction">
    <interactant intactId="EBI-525927">
        <id>Q86XR7</id>
    </interactant>
    <interactant intactId="EBI-741158">
        <id>Q96HA8</id>
        <label>NTAQ1</label>
    </interactant>
    <organismsDiffer>false</organismsDiffer>
    <experiments>3</experiments>
</comment>
<comment type="interaction">
    <interactant intactId="EBI-525927">
        <id>Q86XR7</id>
    </interactant>
    <interactant intactId="EBI-11693532">
        <id>Q6SZW1</id>
        <label>SARM1</label>
    </interactant>
    <organismsDiffer>false</organismsDiffer>
    <experiments>2</experiments>
</comment>
<comment type="interaction">
    <interactant intactId="EBI-525927">
        <id>Q86XR7</id>
    </interactant>
    <interactant intactId="EBI-528701">
        <id>O00206</id>
        <label>TLR4</label>
    </interactant>
    <organismsDiffer>false</organismsDiffer>
    <experiments>3</experiments>
</comment>
<comment type="subcellular location">
    <molecule>Isoform 1</molecule>
    <subcellularLocation>
        <location evidence="11">Cytoplasm</location>
    </subcellularLocation>
    <subcellularLocation>
        <location>Golgi apparatus</location>
    </subcellularLocation>
    <subcellularLocation>
        <location evidence="11">Cell membrane</location>
    </subcellularLocation>
    <subcellularLocation>
        <location>Endoplasmic reticulum</location>
    </subcellularLocation>
    <subcellularLocation>
        <location>Early endosome membrane</location>
    </subcellularLocation>
    <subcellularLocation>
        <location>Late endosome membrane</location>
    </subcellularLocation>
    <subcellularLocation>
        <location evidence="12">Cell projection</location>
        <location evidence="12">Phagocytic cup</location>
    </subcellularLocation>
    <text>Localized to the plasma membrane as a result of myristoylation. Phosphorylation on Ser-16 leads to its depletion from the membrane. Upon LPS stimulation colcoalizes with isoform 2 in late endosomes.</text>
</comment>
<comment type="subcellular location">
    <molecule>Isoform 2</molecule>
    <subcellularLocation>
        <location>Endoplasmic reticulum</location>
    </subcellularLocation>
    <subcellularLocation>
        <location>Early endosome membrane</location>
    </subcellularLocation>
    <subcellularLocation>
        <location>Late endosome membrane</location>
    </subcellularLocation>
    <text>Translocates to late endosomes upon LPS stimulation where it colcoalizes with isoform 1.</text>
</comment>
<comment type="alternative products">
    <event type="alternative splicing"/>
    <isoform>
        <id>Q86XR7-1</id>
        <name>1</name>
        <name>TRAM</name>
        <sequence type="displayed"/>
    </isoform>
    <isoform>
        <id>Q86XR7-2</id>
        <name>2</name>
        <name>TAG</name>
        <name>TRAM adaptor with GOLD domain</name>
        <sequence type="described" ref="VSP_047437"/>
    </isoform>
</comment>
<comment type="tissue specificity">
    <text evidence="3 5 8">Expressed in spleen, prostate, testis, uterus, small intestine, colon, peripheral blood leukocytes, heart, placenta, lung, liver, skeletal muscle, and pancreas Isoform 2 is ubiquitously expressed (at lower levels than isoform 1).</text>
</comment>
<comment type="domain">
    <text evidence="3">The TIR domain mediates the interaction with TRAF6 and MYD88.</text>
</comment>
<comment type="PTM">
    <text evidence="7 11">Phosphorylated by PRKCE in response to LPS. Phosphorylation is essential for its function. It is depleted from the membrane upon phosphorylation. Tyrosine phosphorylation is inhibited by phosphatase PTPN4.</text>
</comment>
<comment type="PTM">
    <text evidence="6">Isoform 1 is myristoylated. Required for membrane association which is critical for its ability to initiate efficient signaling.</text>
</comment>
<accession>Q86XR7</accession>
<accession>B3Y698</accession>
<accession>Q6JUT2</accession>